<proteinExistence type="inferred from homology"/>
<keyword id="KW-0028">Amino-acid biosynthesis</keyword>
<keyword id="KW-0057">Aromatic amino acid biosynthesis</keyword>
<keyword id="KW-0963">Cytoplasm</keyword>
<keyword id="KW-0808">Transferase</keyword>
<reference key="1">
    <citation type="journal article" date="1996" name="Curr. Microbiol.">
        <title>Ribosomal protein S1 (RpsA) of Buchnera aphidicola, the endosymbiont of aphids: characterization of the gene and detection of the product.</title>
        <authorList>
            <person name="Clark M.A."/>
            <person name="Baumann L."/>
            <person name="Baumann P."/>
            <person name="Rouhbakhsh D."/>
        </authorList>
    </citation>
    <scope>NUCLEOTIDE SEQUENCE [GENOMIC DNA]</scope>
</reference>
<reference key="2">
    <citation type="journal article" date="2002" name="Science">
        <title>50 million years of genomic stasis in endosymbiotic bacteria.</title>
        <authorList>
            <person name="Tamas I."/>
            <person name="Klasson L."/>
            <person name="Canbaeck B."/>
            <person name="Naeslund A.K."/>
            <person name="Eriksson A.-S."/>
            <person name="Wernegreen J.J."/>
            <person name="Sandstroem J.P."/>
            <person name="Moran N.A."/>
            <person name="Andersson S.G.E."/>
        </authorList>
    </citation>
    <scope>NUCLEOTIDE SEQUENCE [LARGE SCALE GENOMIC DNA]</scope>
    <source>
        <strain>Sg</strain>
    </source>
</reference>
<evidence type="ECO:0000255" key="1">
    <source>
        <dbReference type="HAMAP-Rule" id="MF_00210"/>
    </source>
</evidence>
<evidence type="ECO:0000305" key="2"/>
<protein>
    <recommendedName>
        <fullName evidence="1">3-phosphoshikimate 1-carboxyvinyltransferase</fullName>
        <ecNumber evidence="1">2.5.1.19</ecNumber>
    </recommendedName>
    <alternativeName>
        <fullName evidence="1">5-enolpyruvylshikimate-3-phosphate synthase</fullName>
        <shortName evidence="1">EPSP synthase</shortName>
        <shortName evidence="1">EPSPS</shortName>
    </alternativeName>
</protein>
<organism>
    <name type="scientific">Buchnera aphidicola subsp. Schizaphis graminum (strain Sg)</name>
    <dbReference type="NCBI Taxonomy" id="198804"/>
    <lineage>
        <taxon>Bacteria</taxon>
        <taxon>Pseudomonadati</taxon>
        <taxon>Pseudomonadota</taxon>
        <taxon>Gammaproteobacteria</taxon>
        <taxon>Enterobacterales</taxon>
        <taxon>Erwiniaceae</taxon>
        <taxon>Buchnera</taxon>
    </lineage>
</organism>
<name>AROA_BUCAP</name>
<comment type="function">
    <text evidence="1">Catalyzes the transfer of the enolpyruvyl moiety of phosphoenolpyruvate (PEP) to the 5-hydroxyl of shikimate-3-phosphate (S3P) to produce enolpyruvyl shikimate-3-phosphate and inorganic phosphate.</text>
</comment>
<comment type="catalytic activity">
    <reaction evidence="1">
        <text>3-phosphoshikimate + phosphoenolpyruvate = 5-O-(1-carboxyvinyl)-3-phosphoshikimate + phosphate</text>
        <dbReference type="Rhea" id="RHEA:21256"/>
        <dbReference type="ChEBI" id="CHEBI:43474"/>
        <dbReference type="ChEBI" id="CHEBI:57701"/>
        <dbReference type="ChEBI" id="CHEBI:58702"/>
        <dbReference type="ChEBI" id="CHEBI:145989"/>
        <dbReference type="EC" id="2.5.1.19"/>
    </reaction>
    <physiologicalReaction direction="left-to-right" evidence="1">
        <dbReference type="Rhea" id="RHEA:21257"/>
    </physiologicalReaction>
</comment>
<comment type="pathway">
    <text evidence="1">Metabolic intermediate biosynthesis; chorismate biosynthesis; chorismate from D-erythrose 4-phosphate and phosphoenolpyruvate: step 6/7.</text>
</comment>
<comment type="subunit">
    <text evidence="1">Monomer.</text>
</comment>
<comment type="subcellular location">
    <subcellularLocation>
        <location evidence="1">Cytoplasm</location>
    </subcellularLocation>
</comment>
<comment type="similarity">
    <text evidence="1 2">Belongs to the EPSP synthase family.</text>
</comment>
<feature type="chain" id="PRO_0000088236" description="3-phosphoshikimate 1-carboxyvinyltransferase">
    <location>
        <begin position="1"/>
        <end position="428"/>
    </location>
</feature>
<feature type="active site" description="Proton acceptor" evidence="1">
    <location>
        <position position="314"/>
    </location>
</feature>
<feature type="binding site" evidence="1">
    <location>
        <position position="23"/>
    </location>
    <ligand>
        <name>3-phosphoshikimate</name>
        <dbReference type="ChEBI" id="CHEBI:145989"/>
    </ligand>
</feature>
<feature type="binding site" evidence="1">
    <location>
        <position position="23"/>
    </location>
    <ligand>
        <name>phosphoenolpyruvate</name>
        <dbReference type="ChEBI" id="CHEBI:58702"/>
    </ligand>
</feature>
<feature type="binding site" evidence="1">
    <location>
        <position position="24"/>
    </location>
    <ligand>
        <name>3-phosphoshikimate</name>
        <dbReference type="ChEBI" id="CHEBI:145989"/>
    </ligand>
</feature>
<feature type="binding site" evidence="1">
    <location>
        <position position="28"/>
    </location>
    <ligand>
        <name>3-phosphoshikimate</name>
        <dbReference type="ChEBI" id="CHEBI:145989"/>
    </ligand>
</feature>
<feature type="binding site" evidence="1">
    <location>
        <position position="97"/>
    </location>
    <ligand>
        <name>phosphoenolpyruvate</name>
        <dbReference type="ChEBI" id="CHEBI:58702"/>
    </ligand>
</feature>
<feature type="binding site" evidence="1">
    <location>
        <position position="125"/>
    </location>
    <ligand>
        <name>phosphoenolpyruvate</name>
        <dbReference type="ChEBI" id="CHEBI:58702"/>
    </ligand>
</feature>
<feature type="binding site" evidence="1">
    <location>
        <position position="170"/>
    </location>
    <ligand>
        <name>3-phosphoshikimate</name>
        <dbReference type="ChEBI" id="CHEBI:145989"/>
    </ligand>
</feature>
<feature type="binding site" evidence="1">
    <location>
        <position position="171"/>
    </location>
    <ligand>
        <name>3-phosphoshikimate</name>
        <dbReference type="ChEBI" id="CHEBI:145989"/>
    </ligand>
</feature>
<feature type="binding site" evidence="1">
    <location>
        <position position="172"/>
    </location>
    <ligand>
        <name>3-phosphoshikimate</name>
        <dbReference type="ChEBI" id="CHEBI:145989"/>
    </ligand>
</feature>
<feature type="binding site" evidence="1">
    <location>
        <position position="172"/>
    </location>
    <ligand>
        <name>phosphoenolpyruvate</name>
        <dbReference type="ChEBI" id="CHEBI:58702"/>
    </ligand>
</feature>
<feature type="binding site" evidence="1">
    <location>
        <position position="198"/>
    </location>
    <ligand>
        <name>3-phosphoshikimate</name>
        <dbReference type="ChEBI" id="CHEBI:145989"/>
    </ligand>
</feature>
<feature type="binding site" evidence="1">
    <location>
        <position position="314"/>
    </location>
    <ligand>
        <name>3-phosphoshikimate</name>
        <dbReference type="ChEBI" id="CHEBI:145989"/>
    </ligand>
</feature>
<feature type="binding site" evidence="1">
    <location>
        <position position="337"/>
    </location>
    <ligand>
        <name>3-phosphoshikimate</name>
        <dbReference type="ChEBI" id="CHEBI:145989"/>
    </ligand>
</feature>
<feature type="binding site" evidence="1">
    <location>
        <position position="341"/>
    </location>
    <ligand>
        <name>3-phosphoshikimate</name>
        <dbReference type="ChEBI" id="CHEBI:145989"/>
    </ligand>
</feature>
<feature type="binding site" evidence="1">
    <location>
        <position position="345"/>
    </location>
    <ligand>
        <name>phosphoenolpyruvate</name>
        <dbReference type="ChEBI" id="CHEBI:58702"/>
    </ligand>
</feature>
<feature type="binding site" evidence="1">
    <location>
        <position position="387"/>
    </location>
    <ligand>
        <name>phosphoenolpyruvate</name>
        <dbReference type="ChEBI" id="CHEBI:58702"/>
    </ligand>
</feature>
<feature type="binding site" evidence="1">
    <location>
        <position position="412"/>
    </location>
    <ligand>
        <name>phosphoenolpyruvate</name>
        <dbReference type="ChEBI" id="CHEBI:58702"/>
    </ligand>
</feature>
<dbReference type="EC" id="2.5.1.19" evidence="1"/>
<dbReference type="EMBL" id="L43549">
    <property type="protein sequence ID" value="AAC05428.1"/>
    <property type="molecule type" value="Genomic_DNA"/>
</dbReference>
<dbReference type="EMBL" id="AE013218">
    <property type="protein sequence ID" value="AAM67855.1"/>
    <property type="molecule type" value="Genomic_DNA"/>
</dbReference>
<dbReference type="RefSeq" id="WP_011053822.1">
    <property type="nucleotide sequence ID" value="NC_004061.1"/>
</dbReference>
<dbReference type="SMR" id="Q59178"/>
<dbReference type="STRING" id="198804.BUsg_301"/>
<dbReference type="GeneID" id="93003770"/>
<dbReference type="KEGG" id="bas:BUsg_301"/>
<dbReference type="eggNOG" id="COG0128">
    <property type="taxonomic scope" value="Bacteria"/>
</dbReference>
<dbReference type="HOGENOM" id="CLU_024321_0_0_6"/>
<dbReference type="UniPathway" id="UPA00053">
    <property type="reaction ID" value="UER00089"/>
</dbReference>
<dbReference type="Proteomes" id="UP000000416">
    <property type="component" value="Chromosome"/>
</dbReference>
<dbReference type="GO" id="GO:0005737">
    <property type="term" value="C:cytoplasm"/>
    <property type="evidence" value="ECO:0007669"/>
    <property type="project" value="UniProtKB-SubCell"/>
</dbReference>
<dbReference type="GO" id="GO:0003866">
    <property type="term" value="F:3-phosphoshikimate 1-carboxyvinyltransferase activity"/>
    <property type="evidence" value="ECO:0007669"/>
    <property type="project" value="UniProtKB-UniRule"/>
</dbReference>
<dbReference type="GO" id="GO:0008652">
    <property type="term" value="P:amino acid biosynthetic process"/>
    <property type="evidence" value="ECO:0007669"/>
    <property type="project" value="UniProtKB-KW"/>
</dbReference>
<dbReference type="GO" id="GO:0009073">
    <property type="term" value="P:aromatic amino acid family biosynthetic process"/>
    <property type="evidence" value="ECO:0007669"/>
    <property type="project" value="UniProtKB-KW"/>
</dbReference>
<dbReference type="GO" id="GO:0009423">
    <property type="term" value="P:chorismate biosynthetic process"/>
    <property type="evidence" value="ECO:0007669"/>
    <property type="project" value="UniProtKB-UniRule"/>
</dbReference>
<dbReference type="CDD" id="cd01556">
    <property type="entry name" value="EPSP_synthase"/>
    <property type="match status" value="1"/>
</dbReference>
<dbReference type="FunFam" id="3.65.10.10:FF:000003">
    <property type="entry name" value="3-phosphoshikimate 1-carboxyvinyltransferase"/>
    <property type="match status" value="1"/>
</dbReference>
<dbReference type="FunFam" id="3.65.10.10:FF:000004">
    <property type="entry name" value="3-phosphoshikimate 1-carboxyvinyltransferase"/>
    <property type="match status" value="1"/>
</dbReference>
<dbReference type="Gene3D" id="3.65.10.10">
    <property type="entry name" value="Enolpyruvate transferase domain"/>
    <property type="match status" value="2"/>
</dbReference>
<dbReference type="HAMAP" id="MF_00210">
    <property type="entry name" value="EPSP_synth"/>
    <property type="match status" value="1"/>
</dbReference>
<dbReference type="InterPro" id="IPR001986">
    <property type="entry name" value="Enolpyruvate_Tfrase_dom"/>
</dbReference>
<dbReference type="InterPro" id="IPR036968">
    <property type="entry name" value="Enolpyruvate_Tfrase_sf"/>
</dbReference>
<dbReference type="InterPro" id="IPR006264">
    <property type="entry name" value="EPSP_synthase"/>
</dbReference>
<dbReference type="InterPro" id="IPR023193">
    <property type="entry name" value="EPSP_synthase_CS"/>
</dbReference>
<dbReference type="InterPro" id="IPR013792">
    <property type="entry name" value="RNA3'P_cycl/enolpyr_Trfase_a/b"/>
</dbReference>
<dbReference type="NCBIfam" id="TIGR01356">
    <property type="entry name" value="aroA"/>
    <property type="match status" value="1"/>
</dbReference>
<dbReference type="PANTHER" id="PTHR21090">
    <property type="entry name" value="AROM/DEHYDROQUINATE SYNTHASE"/>
    <property type="match status" value="1"/>
</dbReference>
<dbReference type="PANTHER" id="PTHR21090:SF5">
    <property type="entry name" value="PENTAFUNCTIONAL AROM POLYPEPTIDE"/>
    <property type="match status" value="1"/>
</dbReference>
<dbReference type="Pfam" id="PF00275">
    <property type="entry name" value="EPSP_synthase"/>
    <property type="match status" value="1"/>
</dbReference>
<dbReference type="PIRSF" id="PIRSF000505">
    <property type="entry name" value="EPSPS"/>
    <property type="match status" value="1"/>
</dbReference>
<dbReference type="SUPFAM" id="SSF55205">
    <property type="entry name" value="EPT/RTPC-like"/>
    <property type="match status" value="1"/>
</dbReference>
<dbReference type="PROSITE" id="PS00104">
    <property type="entry name" value="EPSP_SYNTHASE_1"/>
    <property type="match status" value="1"/>
</dbReference>
<dbReference type="PROSITE" id="PS00885">
    <property type="entry name" value="EPSP_SYNTHASE_2"/>
    <property type="match status" value="1"/>
</dbReference>
<accession>Q59178</accession>
<gene>
    <name evidence="1" type="primary">aroA</name>
    <name type="ordered locus">BUsg_301</name>
</gene>
<sequence>MQKFLELKPVSYINGTIYLPGSKSISNRVLLLSAMANGITCLTNLLDSQDTQYMLNALRKIGIKFFLSNNNTTCHVHGIGKAFHLSHPISLFLGNAGTAMRPLLAALSLYENNVVLSGDDRMHERPIAHLVDALKQGGATLEYKKGIGYPPVLTKGGFKGGSIMLDGSISSQFLTSLLMVAPLALQNTNIFIKGNLVSKPYIDITLNLMKSFGVNIVNDCYKSFYIKGNQKYESPGNYLVEGDASSASYFLAAAAIKGGSVKVVGVGKKSVQGDIKFADVLEKMGAIIDWGDSFIVCRHNKLEKIDLDMNHIPDAAMTIAIVALFAKGTSIIKNIYNWRVKETDRLSAMSKELKKVGAIIKEGRDCLSITPPNFFKFAEIDTYNDHRMAMCFSLICLSGISVRILNPNCISKTFPSYFENFLKISRFD</sequence>